<keyword id="KW-0378">Hydrolase</keyword>
<keyword id="KW-0408">Iron</keyword>
<keyword id="KW-0479">Metal-binding</keyword>
<keyword id="KW-0648">Protein biosynthesis</keyword>
<feature type="chain" id="PRO_0000082878" description="Peptide deformylase 2">
    <location>
        <begin position="1"/>
        <end position="168"/>
    </location>
</feature>
<feature type="active site" evidence="1">
    <location>
        <position position="134"/>
    </location>
</feature>
<feature type="binding site" evidence="1">
    <location>
        <position position="91"/>
    </location>
    <ligand>
        <name>Fe cation</name>
        <dbReference type="ChEBI" id="CHEBI:24875"/>
    </ligand>
</feature>
<feature type="binding site" evidence="1">
    <location>
        <position position="133"/>
    </location>
    <ligand>
        <name>Fe cation</name>
        <dbReference type="ChEBI" id="CHEBI:24875"/>
    </ligand>
</feature>
<feature type="binding site" evidence="1">
    <location>
        <position position="137"/>
    </location>
    <ligand>
        <name>Fe cation</name>
        <dbReference type="ChEBI" id="CHEBI:24875"/>
    </ligand>
</feature>
<accession>Q8D5P5</accession>
<comment type="function">
    <text evidence="1">Removes the formyl group from the N-terminal Met of newly synthesized proteins. Requires at least a dipeptide for an efficient rate of reaction. N-terminal L-methionine is a prerequisite for activity but the enzyme has broad specificity at other positions.</text>
</comment>
<comment type="catalytic activity">
    <reaction evidence="1">
        <text>N-terminal N-formyl-L-methionyl-[peptide] + H2O = N-terminal L-methionyl-[peptide] + formate</text>
        <dbReference type="Rhea" id="RHEA:24420"/>
        <dbReference type="Rhea" id="RHEA-COMP:10639"/>
        <dbReference type="Rhea" id="RHEA-COMP:10640"/>
        <dbReference type="ChEBI" id="CHEBI:15377"/>
        <dbReference type="ChEBI" id="CHEBI:15740"/>
        <dbReference type="ChEBI" id="CHEBI:49298"/>
        <dbReference type="ChEBI" id="CHEBI:64731"/>
        <dbReference type="EC" id="3.5.1.88"/>
    </reaction>
</comment>
<comment type="cofactor">
    <cofactor evidence="1">
        <name>Fe(2+)</name>
        <dbReference type="ChEBI" id="CHEBI:29033"/>
    </cofactor>
    <text evidence="1">Binds 1 Fe(2+) ion.</text>
</comment>
<comment type="similarity">
    <text evidence="1">Belongs to the polypeptide deformylase family.</text>
</comment>
<name>DEF2_VIBVU</name>
<protein>
    <recommendedName>
        <fullName evidence="1">Peptide deformylase 2</fullName>
        <shortName evidence="1">PDF 2</shortName>
        <ecNumber evidence="1">3.5.1.88</ecNumber>
    </recommendedName>
    <alternativeName>
        <fullName evidence="1">Polypeptide deformylase 2</fullName>
    </alternativeName>
</protein>
<organism>
    <name type="scientific">Vibrio vulnificus (strain CMCP6)</name>
    <dbReference type="NCBI Taxonomy" id="216895"/>
    <lineage>
        <taxon>Bacteria</taxon>
        <taxon>Pseudomonadati</taxon>
        <taxon>Pseudomonadota</taxon>
        <taxon>Gammaproteobacteria</taxon>
        <taxon>Vibrionales</taxon>
        <taxon>Vibrionaceae</taxon>
        <taxon>Vibrio</taxon>
    </lineage>
</organism>
<gene>
    <name evidence="1" type="primary">def2</name>
    <name type="ordered locus">VV2_0863</name>
</gene>
<dbReference type="EC" id="3.5.1.88" evidence="1"/>
<dbReference type="EMBL" id="AE016796">
    <property type="protein sequence ID" value="AAO07786.1"/>
    <property type="molecule type" value="Genomic_DNA"/>
</dbReference>
<dbReference type="SMR" id="Q8D5P5"/>
<dbReference type="KEGG" id="vvu:VV2_0863"/>
<dbReference type="HOGENOM" id="CLU_061901_2_1_6"/>
<dbReference type="Proteomes" id="UP000002275">
    <property type="component" value="Chromosome 2"/>
</dbReference>
<dbReference type="GO" id="GO:0046872">
    <property type="term" value="F:metal ion binding"/>
    <property type="evidence" value="ECO:0007669"/>
    <property type="project" value="UniProtKB-KW"/>
</dbReference>
<dbReference type="GO" id="GO:0042586">
    <property type="term" value="F:peptide deformylase activity"/>
    <property type="evidence" value="ECO:0007669"/>
    <property type="project" value="UniProtKB-UniRule"/>
</dbReference>
<dbReference type="GO" id="GO:0043686">
    <property type="term" value="P:co-translational protein modification"/>
    <property type="evidence" value="ECO:0007669"/>
    <property type="project" value="TreeGrafter"/>
</dbReference>
<dbReference type="GO" id="GO:0006412">
    <property type="term" value="P:translation"/>
    <property type="evidence" value="ECO:0007669"/>
    <property type="project" value="UniProtKB-UniRule"/>
</dbReference>
<dbReference type="CDD" id="cd00487">
    <property type="entry name" value="Pep_deformylase"/>
    <property type="match status" value="1"/>
</dbReference>
<dbReference type="FunFam" id="3.90.45.10:FF:000001">
    <property type="entry name" value="Peptide deformylase"/>
    <property type="match status" value="1"/>
</dbReference>
<dbReference type="Gene3D" id="3.90.45.10">
    <property type="entry name" value="Peptide deformylase"/>
    <property type="match status" value="1"/>
</dbReference>
<dbReference type="HAMAP" id="MF_00163">
    <property type="entry name" value="Pep_deformylase"/>
    <property type="match status" value="1"/>
</dbReference>
<dbReference type="InterPro" id="IPR023635">
    <property type="entry name" value="Peptide_deformylase"/>
</dbReference>
<dbReference type="InterPro" id="IPR036821">
    <property type="entry name" value="Peptide_deformylase_sf"/>
</dbReference>
<dbReference type="NCBIfam" id="TIGR00079">
    <property type="entry name" value="pept_deformyl"/>
    <property type="match status" value="1"/>
</dbReference>
<dbReference type="NCBIfam" id="NF001159">
    <property type="entry name" value="PRK00150.1-3"/>
    <property type="match status" value="1"/>
</dbReference>
<dbReference type="PANTHER" id="PTHR10458">
    <property type="entry name" value="PEPTIDE DEFORMYLASE"/>
    <property type="match status" value="1"/>
</dbReference>
<dbReference type="PANTHER" id="PTHR10458:SF22">
    <property type="entry name" value="PEPTIDE DEFORMYLASE"/>
    <property type="match status" value="1"/>
</dbReference>
<dbReference type="Pfam" id="PF01327">
    <property type="entry name" value="Pep_deformylase"/>
    <property type="match status" value="1"/>
</dbReference>
<dbReference type="PIRSF" id="PIRSF004749">
    <property type="entry name" value="Pep_def"/>
    <property type="match status" value="1"/>
</dbReference>
<dbReference type="PRINTS" id="PR01576">
    <property type="entry name" value="PDEFORMYLASE"/>
</dbReference>
<dbReference type="SUPFAM" id="SSF56420">
    <property type="entry name" value="Peptide deformylase"/>
    <property type="match status" value="1"/>
</dbReference>
<sequence>MAVLEILTAPDPRLRVQSKEVTDVAAVQTLIDDLLETLYETDNGVGLAAPQVGREEAIVVIDLSENRDEPLVLVNPKVVSGSNKEMGQEGCLSVPDYYADVERYTSVVVEALDRDGKPLRIETSEFLAIVMQHEIDHLSGNLFIDYLSPLKQQMAMKKVKKHNKLRAR</sequence>
<reference key="1">
    <citation type="submission" date="2002-12" db="EMBL/GenBank/DDBJ databases">
        <title>Complete genome sequence of Vibrio vulnificus CMCP6.</title>
        <authorList>
            <person name="Rhee J.H."/>
            <person name="Kim S.Y."/>
            <person name="Chung S.S."/>
            <person name="Kim J.J."/>
            <person name="Moon Y.H."/>
            <person name="Jeong H."/>
            <person name="Choy H.E."/>
        </authorList>
    </citation>
    <scope>NUCLEOTIDE SEQUENCE [LARGE SCALE GENOMIC DNA]</scope>
    <source>
        <strain>CMCP6</strain>
    </source>
</reference>
<proteinExistence type="inferred from homology"/>
<evidence type="ECO:0000255" key="1">
    <source>
        <dbReference type="HAMAP-Rule" id="MF_00163"/>
    </source>
</evidence>